<reference key="1">
    <citation type="journal article" date="2011" name="MBio">
        <title>Novel metabolic attributes of the genus Cyanothece, comprising a group of unicellular nitrogen-fixing Cyanobacteria.</title>
        <authorList>
            <person name="Bandyopadhyay A."/>
            <person name="Elvitigala T."/>
            <person name="Welsh E."/>
            <person name="Stockel J."/>
            <person name="Liberton M."/>
            <person name="Min H."/>
            <person name="Sherman L.A."/>
            <person name="Pakrasi H.B."/>
        </authorList>
    </citation>
    <scope>NUCLEOTIDE SEQUENCE [LARGE SCALE GENOMIC DNA]</scope>
    <source>
        <strain>PCC 7424</strain>
    </source>
</reference>
<evidence type="ECO:0000255" key="1">
    <source>
        <dbReference type="HAMAP-Rule" id="MF_01197"/>
    </source>
</evidence>
<evidence type="ECO:0000256" key="2">
    <source>
        <dbReference type="SAM" id="MobiDB-lite"/>
    </source>
</evidence>
<keyword id="KW-0131">Cell cycle</keyword>
<keyword id="KW-0132">Cell division</keyword>
<keyword id="KW-0963">Cytoplasm</keyword>
<keyword id="KW-1185">Reference proteome</keyword>
<keyword id="KW-0717">Septation</keyword>
<protein>
    <recommendedName>
        <fullName evidence="1">Cell division protein SepF</fullName>
    </recommendedName>
</protein>
<dbReference type="EMBL" id="CP001291">
    <property type="protein sequence ID" value="ACK69012.1"/>
    <property type="molecule type" value="Genomic_DNA"/>
</dbReference>
<dbReference type="RefSeq" id="WP_012597959.1">
    <property type="nucleotide sequence ID" value="NC_011729.1"/>
</dbReference>
<dbReference type="SMR" id="B7KEI7"/>
<dbReference type="STRING" id="65393.PCC7424_0549"/>
<dbReference type="KEGG" id="cyc:PCC7424_0549"/>
<dbReference type="eggNOG" id="COG1799">
    <property type="taxonomic scope" value="Bacteria"/>
</dbReference>
<dbReference type="HOGENOM" id="CLU_078499_1_1_3"/>
<dbReference type="OrthoDB" id="9815206at2"/>
<dbReference type="Proteomes" id="UP000002384">
    <property type="component" value="Chromosome"/>
</dbReference>
<dbReference type="GO" id="GO:0005737">
    <property type="term" value="C:cytoplasm"/>
    <property type="evidence" value="ECO:0007669"/>
    <property type="project" value="UniProtKB-SubCell"/>
</dbReference>
<dbReference type="GO" id="GO:0000917">
    <property type="term" value="P:division septum assembly"/>
    <property type="evidence" value="ECO:0007669"/>
    <property type="project" value="UniProtKB-KW"/>
</dbReference>
<dbReference type="GO" id="GO:0043093">
    <property type="term" value="P:FtsZ-dependent cytokinesis"/>
    <property type="evidence" value="ECO:0007669"/>
    <property type="project" value="UniProtKB-UniRule"/>
</dbReference>
<dbReference type="Gene3D" id="3.30.110.150">
    <property type="entry name" value="SepF-like protein"/>
    <property type="match status" value="1"/>
</dbReference>
<dbReference type="HAMAP" id="MF_01197">
    <property type="entry name" value="SepF"/>
    <property type="match status" value="1"/>
</dbReference>
<dbReference type="InterPro" id="IPR023052">
    <property type="entry name" value="Cell_div_SepF"/>
</dbReference>
<dbReference type="InterPro" id="IPR007561">
    <property type="entry name" value="Cell_div_SepF/SepF-rel"/>
</dbReference>
<dbReference type="InterPro" id="IPR038594">
    <property type="entry name" value="SepF-like_sf"/>
</dbReference>
<dbReference type="PANTHER" id="PTHR35798">
    <property type="entry name" value="CELL DIVISION PROTEIN SEPF"/>
    <property type="match status" value="1"/>
</dbReference>
<dbReference type="PANTHER" id="PTHR35798:SF1">
    <property type="entry name" value="CELL DIVISION PROTEIN SEPF"/>
    <property type="match status" value="1"/>
</dbReference>
<dbReference type="Pfam" id="PF04472">
    <property type="entry name" value="SepF"/>
    <property type="match status" value="1"/>
</dbReference>
<feature type="chain" id="PRO_1000138466" description="Cell division protein SepF">
    <location>
        <begin position="1"/>
        <end position="195"/>
    </location>
</feature>
<feature type="region of interest" description="Disordered" evidence="2">
    <location>
        <begin position="32"/>
        <end position="54"/>
    </location>
</feature>
<organism>
    <name type="scientific">Gloeothece citriformis (strain PCC 7424)</name>
    <name type="common">Cyanothece sp. (strain PCC 7424)</name>
    <dbReference type="NCBI Taxonomy" id="65393"/>
    <lineage>
        <taxon>Bacteria</taxon>
        <taxon>Bacillati</taxon>
        <taxon>Cyanobacteriota</taxon>
        <taxon>Cyanophyceae</taxon>
        <taxon>Oscillatoriophycideae</taxon>
        <taxon>Chroococcales</taxon>
        <taxon>Aphanothecaceae</taxon>
        <taxon>Gloeothece</taxon>
        <taxon>Gloeothece citriformis</taxon>
    </lineage>
</organism>
<name>SEPF_GLOC7</name>
<gene>
    <name evidence="1" type="primary">sepF</name>
    <name type="ordered locus">PCC7424_0549</name>
</gene>
<sequence length="195" mass="21792">MNTILTKLKDFVGISEHDDEYETDYEEMEYDRYSKTNSSETLAPEEEEPIRNRRTRESLNLTSDVPMGTTTRNNVIGMPGITNGIAEVVVIEPHSFEEMPQVIQTLRERKSVVLNLNVMDPEEAQRAVDFVAGGTYAIDGHQERIGESIFLFTPSCVKVSTLTGTVHDVPETPKATTRPTMSTPVWGAEASRIAQ</sequence>
<accession>B7KEI7</accession>
<proteinExistence type="inferred from homology"/>
<comment type="function">
    <text evidence="1">Cell division protein that is part of the divisome complex and is recruited early to the Z-ring. Probably stimulates Z-ring formation, perhaps through the cross-linking of FtsZ protofilaments. Its function overlaps with FtsA.</text>
</comment>
<comment type="subunit">
    <text evidence="1">Homodimer. Interacts with FtsZ.</text>
</comment>
<comment type="subcellular location">
    <subcellularLocation>
        <location evidence="1">Cytoplasm</location>
    </subcellularLocation>
    <text evidence="1">Localizes to the division site, in a FtsZ-dependent manner.</text>
</comment>
<comment type="similarity">
    <text evidence="1">Belongs to the SepF family.</text>
</comment>